<comment type="function">
    <text evidence="5 6 7 8">Snake venom zinc metalloprotease that inhibits platelet aggregation by binding specifically to platelet glycoprotein VI (GP6) and platelet glycoprotein Ib alpha (GP1BA). It inhibits the interaction between collagen and platelet GP6 by cleaving GP6 (at '225-Glu-|-Ala-226' and '238-Val-|-Phe-239' bonds), and inhibits vWF-induced platelet aggregation by cleaving GP1BA and vWF. Cleavage of GP1BA occurs at two distinct sites to generate two soluble fragments. It also cleaves alpha- (FGA) and subsequently the gamma-chain (FGG) of fibrinogen, leaving the beta-chain unaffected. It also inhibits collagen-, convulxin- and ristocetin-induced platelet aggregation. It blocks the adhesion of platelet to immobilized collagen, but only exerts a slight inhibition to fibrinogen. In vivo, it exerts potent antithrombotic effect.</text>
</comment>
<comment type="cofactor">
    <cofactor evidence="1">
        <name>Zn(2+)</name>
        <dbReference type="ChEBI" id="CHEBI:29105"/>
    </cofactor>
    <text evidence="1">Binds 1 zinc ion per subunit.</text>
</comment>
<comment type="activity regulation">
    <text evidence="5 6">Inhibited by EDTA, and O-phenanthrolene.</text>
</comment>
<comment type="subunit">
    <text evidence="1">Monomer.</text>
</comment>
<comment type="subcellular location">
    <subcellularLocation>
        <location>Secreted</location>
    </subcellularLocation>
</comment>
<comment type="tissue specificity">
    <text>Expressed by the venom gland.</text>
</comment>
<comment type="similarity">
    <text evidence="9">Belongs to the venom metalloproteinase (M12B) family. P-I subfamily.</text>
</comment>
<accession>P0CB14</accession>
<organism>
    <name type="scientific">Calloselasma rhodostoma</name>
    <name type="common">Malayan pit viper</name>
    <name type="synonym">Agkistrodon rhodostoma</name>
    <dbReference type="NCBI Taxonomy" id="8717"/>
    <lineage>
        <taxon>Eukaryota</taxon>
        <taxon>Metazoa</taxon>
        <taxon>Chordata</taxon>
        <taxon>Craniata</taxon>
        <taxon>Vertebrata</taxon>
        <taxon>Euteleostomi</taxon>
        <taxon>Lepidosauria</taxon>
        <taxon>Squamata</taxon>
        <taxon>Bifurcata</taxon>
        <taxon>Unidentata</taxon>
        <taxon>Episquamata</taxon>
        <taxon>Toxicofera</taxon>
        <taxon>Serpentes</taxon>
        <taxon>Colubroidea</taxon>
        <taxon>Viperidae</taxon>
        <taxon>Crotalinae</taxon>
        <taxon>Calloselasma</taxon>
    </lineage>
</organism>
<sequence length="417" mass="47446">MIEVLLVTICLAAFPYQGSSIILESGNVNDYEVVYPRKITALSEGAAQQKYEDTMQYEFKVNGEPVVLHLEKNKELFAKDYSETHYSPDGTRITTYPSVEDHCYYQGRIHNDADSTASISTCNGLKGHFKFHGERYFIEPLKLPGSEAHAVYKYENIEKEDETPKMCGVIQKWKSDELIKKPFRLNLTPQQQESPQAKVYLVIVADKSMVDKHNGNIKKIEEQGHQMVNTMNECYRPMGIIIIMAGIECWTTNDFFEVKSSAKETLYSFAKWRVEDLSKRKPHNDAQFLTNKDFDGNTVGLAFVGGICNEKYCAGVVQDHTKVPLLMAITMGHEIGHNLGMEHDEANCKCKACVMAPEVNNNPTKKFSDCSRNYYQKFLKDRKPECLFKKPLRTDTVSTPVSGNEPLEVITMDDFYA</sequence>
<proteinExistence type="evidence at protein level"/>
<feature type="signal peptide" evidence="2">
    <location>
        <begin position="1"/>
        <end position="20"/>
    </location>
</feature>
<feature type="propeptide" id="PRO_0000380630" evidence="1">
    <location>
        <begin position="21"/>
        <end position="189"/>
    </location>
</feature>
<feature type="chain" id="PRO_0000380631" description="Snake venom metalloproteinase kistomin">
    <location>
        <begin position="190"/>
        <end position="391"/>
    </location>
</feature>
<feature type="propeptide" id="PRO_0000380632" evidence="1">
    <location>
        <begin position="392"/>
        <end position="417"/>
    </location>
</feature>
<feature type="domain" description="Peptidase M12B" evidence="3">
    <location>
        <begin position="197"/>
        <end position="391"/>
    </location>
</feature>
<feature type="active site" evidence="3 4">
    <location>
        <position position="334"/>
    </location>
</feature>
<feature type="binding site" evidence="1">
    <location>
        <position position="333"/>
    </location>
    <ligand>
        <name>Zn(2+)</name>
        <dbReference type="ChEBI" id="CHEBI:29105"/>
        <note>catalytic</note>
    </ligand>
</feature>
<feature type="binding site" evidence="1">
    <location>
        <position position="337"/>
    </location>
    <ligand>
        <name>Zn(2+)</name>
        <dbReference type="ChEBI" id="CHEBI:29105"/>
        <note>catalytic</note>
    </ligand>
</feature>
<feature type="binding site" evidence="1">
    <location>
        <position position="343"/>
    </location>
    <ligand>
        <name>Zn(2+)</name>
        <dbReference type="ChEBI" id="CHEBI:29105"/>
        <note>catalytic</note>
    </ligand>
</feature>
<feature type="disulfide bond" evidence="3">
    <location>
        <begin position="308"/>
        <end position="386"/>
    </location>
</feature>
<feature type="disulfide bond" evidence="3">
    <location>
        <begin position="348"/>
        <end position="370"/>
    </location>
</feature>
<feature type="disulfide bond" evidence="3">
    <location>
        <begin position="350"/>
        <end position="353"/>
    </location>
</feature>
<name>VM1K_CALRH</name>
<dbReference type="EC" id="3.4.24.-"/>
<dbReference type="SMR" id="P0CB14"/>
<dbReference type="GO" id="GO:0005576">
    <property type="term" value="C:extracellular region"/>
    <property type="evidence" value="ECO:0007669"/>
    <property type="project" value="UniProtKB-SubCell"/>
</dbReference>
<dbReference type="GO" id="GO:0005886">
    <property type="term" value="C:plasma membrane"/>
    <property type="evidence" value="ECO:0007669"/>
    <property type="project" value="TreeGrafter"/>
</dbReference>
<dbReference type="GO" id="GO:0046872">
    <property type="term" value="F:metal ion binding"/>
    <property type="evidence" value="ECO:0007669"/>
    <property type="project" value="UniProtKB-KW"/>
</dbReference>
<dbReference type="GO" id="GO:0004222">
    <property type="term" value="F:metalloendopeptidase activity"/>
    <property type="evidence" value="ECO:0007669"/>
    <property type="project" value="InterPro"/>
</dbReference>
<dbReference type="GO" id="GO:0008233">
    <property type="term" value="F:peptidase activity"/>
    <property type="evidence" value="ECO:0000314"/>
    <property type="project" value="CACAO"/>
</dbReference>
<dbReference type="GO" id="GO:0090729">
    <property type="term" value="F:toxin activity"/>
    <property type="evidence" value="ECO:0007669"/>
    <property type="project" value="UniProtKB-KW"/>
</dbReference>
<dbReference type="GO" id="GO:0006508">
    <property type="term" value="P:proteolysis"/>
    <property type="evidence" value="ECO:0007669"/>
    <property type="project" value="UniProtKB-KW"/>
</dbReference>
<dbReference type="GO" id="GO:0044477">
    <property type="term" value="P:venom-mediated suppression of platelet aggregation"/>
    <property type="evidence" value="ECO:0000314"/>
    <property type="project" value="CACAO"/>
</dbReference>
<dbReference type="CDD" id="cd04269">
    <property type="entry name" value="ZnMc_adamalysin_II_like"/>
    <property type="match status" value="1"/>
</dbReference>
<dbReference type="FunFam" id="3.40.390.10:FF:000002">
    <property type="entry name" value="Disintegrin and metalloproteinase domain-containing protein 22"/>
    <property type="match status" value="1"/>
</dbReference>
<dbReference type="Gene3D" id="3.40.390.10">
    <property type="entry name" value="Collagenase (Catalytic Domain)"/>
    <property type="match status" value="1"/>
</dbReference>
<dbReference type="InterPro" id="IPR024079">
    <property type="entry name" value="MetalloPept_cat_dom_sf"/>
</dbReference>
<dbReference type="InterPro" id="IPR001590">
    <property type="entry name" value="Peptidase_M12B"/>
</dbReference>
<dbReference type="InterPro" id="IPR002870">
    <property type="entry name" value="Peptidase_M12B_N"/>
</dbReference>
<dbReference type="InterPro" id="IPR034027">
    <property type="entry name" value="Reprolysin_adamalysin"/>
</dbReference>
<dbReference type="PANTHER" id="PTHR11905">
    <property type="entry name" value="ADAM A DISINTEGRIN AND METALLOPROTEASE DOMAIN"/>
    <property type="match status" value="1"/>
</dbReference>
<dbReference type="PANTHER" id="PTHR11905:SF32">
    <property type="entry name" value="DISINTEGRIN AND METALLOPROTEINASE DOMAIN-CONTAINING PROTEIN 28"/>
    <property type="match status" value="1"/>
</dbReference>
<dbReference type="Pfam" id="PF01562">
    <property type="entry name" value="Pep_M12B_propep"/>
    <property type="match status" value="1"/>
</dbReference>
<dbReference type="Pfam" id="PF01421">
    <property type="entry name" value="Reprolysin"/>
    <property type="match status" value="1"/>
</dbReference>
<dbReference type="SUPFAM" id="SSF55486">
    <property type="entry name" value="Metalloproteases ('zincins'), catalytic domain"/>
    <property type="match status" value="1"/>
</dbReference>
<dbReference type="PROSITE" id="PS50215">
    <property type="entry name" value="ADAM_MEPRO"/>
    <property type="match status" value="1"/>
</dbReference>
<dbReference type="PROSITE" id="PS00142">
    <property type="entry name" value="ZINC_PROTEASE"/>
    <property type="match status" value="1"/>
</dbReference>
<reference key="1">
    <citation type="journal article" date="2007" name="Mol. Pharmacol.">
        <title>Antithrombotic effect of a protein-type I class snake venom metalloproteinase, kistomin, is mediated by affecting glycoprotein Ib-von Willebrand factor interaction.</title>
        <authorList>
            <person name="Hsu C.C."/>
            <person name="Wu W.B."/>
            <person name="Chang Y.H."/>
            <person name="Kuo H.L."/>
            <person name="Huang T.F."/>
        </authorList>
    </citation>
    <scope>NUCLEOTIDE SEQUENCE [MRNA]</scope>
    <scope>PROTEIN SEQUENCE OF 277-296; 210-221 AND 356-370</scope>
    <scope>FUNCTION</scope>
    <scope>ACTIVITY REGULATION</scope>
    <source>
        <tissue>Venom</tissue>
        <tissue>Venom gland</tissue>
    </source>
</reference>
<reference key="2">
    <citation type="journal article" date="2008" name="J. Thromb. Haemost.">
        <title>A snake venom metalloproteinase, kistomin, cleaves platelet glycoprotein VI and impairs platelet functions.</title>
        <authorList>
            <person name="Hsu C.C."/>
            <person name="Wu W.B."/>
            <person name="Huang T.F."/>
        </authorList>
    </citation>
    <scope>FUNCTION</scope>
    <scope>CATALYTIC ACTIVITY</scope>
    <source>
        <tissue>Venom</tissue>
    </source>
</reference>
<reference key="3">
    <citation type="journal article" date="1993" name="Biochim. Biophys. Acta">
        <title>Antiplatelet protease, kistomin, selectively cleaves human platelet glycoprotein Ib.</title>
        <authorList>
            <person name="Huang T.F."/>
            <person name="Chang M.C."/>
            <person name="Teng C.M."/>
        </authorList>
    </citation>
    <scope>FUNCTION</scope>
</reference>
<reference key="4">
    <citation type="journal article" date="1992" name="Biochim. Biophys. Acta">
        <title>A novel alpha-type fibrinogenase from Agkistrodon rhodostoma snake venom.</title>
        <authorList>
            <person name="Huang T.F."/>
            <person name="Chang M.C."/>
            <person name="Peng H.C."/>
            <person name="Teng C.M."/>
        </authorList>
    </citation>
    <scope>FUNCTION</scope>
    <scope>ACTIVITY REGULATION</scope>
</reference>
<keyword id="KW-0903">Direct protein sequencing</keyword>
<keyword id="KW-1015">Disulfide bond</keyword>
<keyword id="KW-1199">Hemostasis impairing toxin</keyword>
<keyword id="KW-0378">Hydrolase</keyword>
<keyword id="KW-0479">Metal-binding</keyword>
<keyword id="KW-0482">Metalloprotease</keyword>
<keyword id="KW-1201">Platelet aggregation inhibiting toxin</keyword>
<keyword id="KW-0645">Protease</keyword>
<keyword id="KW-0964">Secreted</keyword>
<keyword id="KW-0732">Signal</keyword>
<keyword id="KW-0800">Toxin</keyword>
<keyword id="KW-0862">Zinc</keyword>
<keyword id="KW-0865">Zymogen</keyword>
<protein>
    <recommendedName>
        <fullName>Snake venom metalloproteinase kistomin</fullName>
        <shortName>SVMP</shortName>
        <ecNumber>3.4.24.-</ecNumber>
    </recommendedName>
</protein>
<evidence type="ECO:0000250" key="1"/>
<evidence type="ECO:0000255" key="2"/>
<evidence type="ECO:0000255" key="3">
    <source>
        <dbReference type="PROSITE-ProRule" id="PRU00276"/>
    </source>
</evidence>
<evidence type="ECO:0000255" key="4">
    <source>
        <dbReference type="PROSITE-ProRule" id="PRU10095"/>
    </source>
</evidence>
<evidence type="ECO:0000269" key="5">
    <source>
    </source>
</evidence>
<evidence type="ECO:0000269" key="6">
    <source>
    </source>
</evidence>
<evidence type="ECO:0000269" key="7">
    <source>
    </source>
</evidence>
<evidence type="ECO:0000269" key="8">
    <source>
    </source>
</evidence>
<evidence type="ECO:0000305" key="9"/>